<gene>
    <name type="ordered locus">CLJ_B0679</name>
</gene>
<protein>
    <recommendedName>
        <fullName evidence="1">UPF0316 protein CLJ_B0679</fullName>
    </recommendedName>
</protein>
<sequence>MLSYYAFIFFAKIMEVALMTIRTVLITRGEKLYGSIIGFIEVTIWLYVTSSVLSGIKDDPIRMVVYALGFTCGNYMGCVIEEKLAIGLLTINVITSESDGKRLAEILRDKNVGVTMVDAEGKIEQKKMLIIHAKRKRREEIIRTIEGSDINAMISVNDIKTVYGGYGIRK</sequence>
<reference key="1">
    <citation type="submission" date="2008-05" db="EMBL/GenBank/DDBJ databases">
        <title>Genome sequence of Clostridium botulinum Ba4 strain 657.</title>
        <authorList>
            <person name="Shrivastava S."/>
            <person name="Brown J.L."/>
            <person name="Bruce D."/>
            <person name="Detter C."/>
            <person name="Munk C."/>
            <person name="Smith L.A."/>
            <person name="Smith T.J."/>
            <person name="Sutton G."/>
            <person name="Brettin T.S."/>
        </authorList>
    </citation>
    <scope>NUCLEOTIDE SEQUENCE [LARGE SCALE GENOMIC DNA]</scope>
    <source>
        <strain>657 / Type Ba4</strain>
    </source>
</reference>
<comment type="subcellular location">
    <subcellularLocation>
        <location evidence="1">Cell membrane</location>
        <topology evidence="1">Multi-pass membrane protein</topology>
    </subcellularLocation>
</comment>
<comment type="similarity">
    <text evidence="1">Belongs to the UPF0316 family.</text>
</comment>
<keyword id="KW-1003">Cell membrane</keyword>
<keyword id="KW-0472">Membrane</keyword>
<keyword id="KW-0812">Transmembrane</keyword>
<keyword id="KW-1133">Transmembrane helix</keyword>
<dbReference type="EMBL" id="CP001083">
    <property type="protein sequence ID" value="ACQ53783.1"/>
    <property type="molecule type" value="Genomic_DNA"/>
</dbReference>
<dbReference type="RefSeq" id="WP_012721044.1">
    <property type="nucleotide sequence ID" value="NC_012658.1"/>
</dbReference>
<dbReference type="SMR" id="C3L101"/>
<dbReference type="KEGG" id="cbi:CLJ_B0679"/>
<dbReference type="HOGENOM" id="CLU_106166_0_0_9"/>
<dbReference type="Proteomes" id="UP000002333">
    <property type="component" value="Chromosome"/>
</dbReference>
<dbReference type="GO" id="GO:0005886">
    <property type="term" value="C:plasma membrane"/>
    <property type="evidence" value="ECO:0007669"/>
    <property type="project" value="UniProtKB-SubCell"/>
</dbReference>
<dbReference type="CDD" id="cd16381">
    <property type="entry name" value="YitT_C_like_1"/>
    <property type="match status" value="1"/>
</dbReference>
<dbReference type="HAMAP" id="MF_01515">
    <property type="entry name" value="UPF0316"/>
    <property type="match status" value="1"/>
</dbReference>
<dbReference type="InterPro" id="IPR019264">
    <property type="entry name" value="DUF2179"/>
</dbReference>
<dbReference type="InterPro" id="IPR044035">
    <property type="entry name" value="DUF5698"/>
</dbReference>
<dbReference type="InterPro" id="IPR022930">
    <property type="entry name" value="UPF0316"/>
</dbReference>
<dbReference type="PANTHER" id="PTHR40060">
    <property type="entry name" value="UPF0316 PROTEIN YEBE"/>
    <property type="match status" value="1"/>
</dbReference>
<dbReference type="PANTHER" id="PTHR40060:SF1">
    <property type="entry name" value="UPF0316 PROTEIN YEBE"/>
    <property type="match status" value="1"/>
</dbReference>
<dbReference type="Pfam" id="PF10035">
    <property type="entry name" value="DUF2179"/>
    <property type="match status" value="1"/>
</dbReference>
<dbReference type="Pfam" id="PF18955">
    <property type="entry name" value="DUF5698"/>
    <property type="match status" value="1"/>
</dbReference>
<proteinExistence type="inferred from homology"/>
<accession>C3L101</accession>
<organism>
    <name type="scientific">Clostridium botulinum (strain 657 / Type Ba4)</name>
    <dbReference type="NCBI Taxonomy" id="515621"/>
    <lineage>
        <taxon>Bacteria</taxon>
        <taxon>Bacillati</taxon>
        <taxon>Bacillota</taxon>
        <taxon>Clostridia</taxon>
        <taxon>Eubacteriales</taxon>
        <taxon>Clostridiaceae</taxon>
        <taxon>Clostridium</taxon>
    </lineage>
</organism>
<name>Y679_CLOB6</name>
<feature type="chain" id="PRO_1000215349" description="UPF0316 protein CLJ_B0679">
    <location>
        <begin position="1"/>
        <end position="170"/>
    </location>
</feature>
<feature type="transmembrane region" description="Helical" evidence="1">
    <location>
        <begin position="1"/>
        <end position="21"/>
    </location>
</feature>
<feature type="transmembrane region" description="Helical" evidence="1">
    <location>
        <begin position="36"/>
        <end position="56"/>
    </location>
</feature>
<evidence type="ECO:0000255" key="1">
    <source>
        <dbReference type="HAMAP-Rule" id="MF_01515"/>
    </source>
</evidence>